<evidence type="ECO:0000255" key="1">
    <source>
        <dbReference type="HAMAP-Rule" id="MF_01445"/>
    </source>
</evidence>
<feature type="chain" id="PRO_0000303319" description="tRNA N6-adenosine threonylcarbamoyltransferase">
    <location>
        <begin position="1"/>
        <end position="344"/>
    </location>
</feature>
<feature type="binding site" evidence="1">
    <location>
        <position position="110"/>
    </location>
    <ligand>
        <name>Fe cation</name>
        <dbReference type="ChEBI" id="CHEBI:24875"/>
    </ligand>
</feature>
<feature type="binding site" evidence="1">
    <location>
        <position position="114"/>
    </location>
    <ligand>
        <name>Fe cation</name>
        <dbReference type="ChEBI" id="CHEBI:24875"/>
    </ligand>
</feature>
<feature type="binding site" evidence="1">
    <location>
        <begin position="133"/>
        <end position="137"/>
    </location>
    <ligand>
        <name>substrate</name>
    </ligand>
</feature>
<feature type="binding site" evidence="1">
    <location>
        <position position="166"/>
    </location>
    <ligand>
        <name>substrate</name>
    </ligand>
</feature>
<feature type="binding site" evidence="1">
    <location>
        <position position="179"/>
    </location>
    <ligand>
        <name>substrate</name>
    </ligand>
</feature>
<feature type="binding site" evidence="1">
    <location>
        <position position="278"/>
    </location>
    <ligand>
        <name>substrate</name>
    </ligand>
</feature>
<feature type="binding site" evidence="1">
    <location>
        <position position="303"/>
    </location>
    <ligand>
        <name>Fe cation</name>
        <dbReference type="ChEBI" id="CHEBI:24875"/>
    </ligand>
</feature>
<name>TSAD_CHLAB</name>
<gene>
    <name evidence="1" type="primary">tsaD</name>
    <name type="synonym">gcp</name>
    <name type="ordered locus">CAB528</name>
</gene>
<sequence>MLTLGLESSCDETACALVDANAKIVANVVFSQQDHVSYGGIVPELASRAHLQVFPSVVQSALKESGVSLEDIDLFAVTHTPGLIGALAIGVNFAKGLAVGCQKPIIGVNHVEAHLYAAYMEASSVEFPALGLVVSGAHTAIFLMEDPLTYKLIGKSRDDAIGETFDKVARFLGLPYPGGALIEKLAVHGCESSYPFSPSKVPGYDLSFSGLKTAVLYAIKGNNSNHRTPLPELSESQKNNISASFQKAAFTSVAQKLPNIVKKFSCRSLLVGGGVANNKYFQSLLKNTLDLPLYFPSSKLCTDNAAMIAGLGRELFLSEKITSGITPCARYQWESASVSLSPLP</sequence>
<dbReference type="EC" id="2.3.1.234" evidence="1"/>
<dbReference type="EMBL" id="CR848038">
    <property type="protein sequence ID" value="CAH63979.1"/>
    <property type="molecule type" value="Genomic_DNA"/>
</dbReference>
<dbReference type="RefSeq" id="WP_011097144.1">
    <property type="nucleotide sequence ID" value="NC_004552.2"/>
</dbReference>
<dbReference type="SMR" id="Q5L5V3"/>
<dbReference type="KEGG" id="cab:CAB528"/>
<dbReference type="eggNOG" id="COG0533">
    <property type="taxonomic scope" value="Bacteria"/>
</dbReference>
<dbReference type="HOGENOM" id="CLU_023208_0_2_0"/>
<dbReference type="OrthoDB" id="9806197at2"/>
<dbReference type="Proteomes" id="UP000001012">
    <property type="component" value="Chromosome"/>
</dbReference>
<dbReference type="GO" id="GO:0005737">
    <property type="term" value="C:cytoplasm"/>
    <property type="evidence" value="ECO:0007669"/>
    <property type="project" value="UniProtKB-SubCell"/>
</dbReference>
<dbReference type="GO" id="GO:0005506">
    <property type="term" value="F:iron ion binding"/>
    <property type="evidence" value="ECO:0007669"/>
    <property type="project" value="UniProtKB-UniRule"/>
</dbReference>
<dbReference type="GO" id="GO:0061711">
    <property type="term" value="F:N(6)-L-threonylcarbamoyladenine synthase activity"/>
    <property type="evidence" value="ECO:0007669"/>
    <property type="project" value="UniProtKB-EC"/>
</dbReference>
<dbReference type="GO" id="GO:0002949">
    <property type="term" value="P:tRNA threonylcarbamoyladenosine modification"/>
    <property type="evidence" value="ECO:0007669"/>
    <property type="project" value="UniProtKB-UniRule"/>
</dbReference>
<dbReference type="CDD" id="cd24133">
    <property type="entry name" value="ASKHA_NBD_TsaD_bac"/>
    <property type="match status" value="1"/>
</dbReference>
<dbReference type="FunFam" id="3.30.420.40:FF:000012">
    <property type="entry name" value="tRNA N6-adenosine threonylcarbamoyltransferase"/>
    <property type="match status" value="1"/>
</dbReference>
<dbReference type="Gene3D" id="3.30.420.40">
    <property type="match status" value="2"/>
</dbReference>
<dbReference type="HAMAP" id="MF_01445">
    <property type="entry name" value="TsaD"/>
    <property type="match status" value="1"/>
</dbReference>
<dbReference type="InterPro" id="IPR043129">
    <property type="entry name" value="ATPase_NBD"/>
</dbReference>
<dbReference type="InterPro" id="IPR000905">
    <property type="entry name" value="Gcp-like_dom"/>
</dbReference>
<dbReference type="InterPro" id="IPR017861">
    <property type="entry name" value="KAE1/TsaD"/>
</dbReference>
<dbReference type="InterPro" id="IPR022450">
    <property type="entry name" value="TsaD"/>
</dbReference>
<dbReference type="NCBIfam" id="TIGR00329">
    <property type="entry name" value="gcp_kae1"/>
    <property type="match status" value="1"/>
</dbReference>
<dbReference type="NCBIfam" id="TIGR03723">
    <property type="entry name" value="T6A_TsaD_YgjD"/>
    <property type="match status" value="1"/>
</dbReference>
<dbReference type="PANTHER" id="PTHR11735">
    <property type="entry name" value="TRNA N6-ADENOSINE THREONYLCARBAMOYLTRANSFERASE"/>
    <property type="match status" value="1"/>
</dbReference>
<dbReference type="PANTHER" id="PTHR11735:SF6">
    <property type="entry name" value="TRNA N6-ADENOSINE THREONYLCARBAMOYLTRANSFERASE, MITOCHONDRIAL"/>
    <property type="match status" value="1"/>
</dbReference>
<dbReference type="Pfam" id="PF00814">
    <property type="entry name" value="TsaD"/>
    <property type="match status" value="1"/>
</dbReference>
<dbReference type="PRINTS" id="PR00789">
    <property type="entry name" value="OSIALOPTASE"/>
</dbReference>
<dbReference type="SUPFAM" id="SSF53067">
    <property type="entry name" value="Actin-like ATPase domain"/>
    <property type="match status" value="1"/>
</dbReference>
<organism>
    <name type="scientific">Chlamydia abortus (strain DSM 27085 / S26/3)</name>
    <name type="common">Chlamydophila abortus</name>
    <dbReference type="NCBI Taxonomy" id="218497"/>
    <lineage>
        <taxon>Bacteria</taxon>
        <taxon>Pseudomonadati</taxon>
        <taxon>Chlamydiota</taxon>
        <taxon>Chlamydiia</taxon>
        <taxon>Chlamydiales</taxon>
        <taxon>Chlamydiaceae</taxon>
        <taxon>Chlamydia/Chlamydophila group</taxon>
        <taxon>Chlamydia</taxon>
    </lineage>
</organism>
<protein>
    <recommendedName>
        <fullName evidence="1">tRNA N6-adenosine threonylcarbamoyltransferase</fullName>
        <ecNumber evidence="1">2.3.1.234</ecNumber>
    </recommendedName>
    <alternativeName>
        <fullName evidence="1">N6-L-threonylcarbamoyladenine synthase</fullName>
        <shortName evidence="1">t(6)A synthase</shortName>
    </alternativeName>
    <alternativeName>
        <fullName evidence="1">t(6)A37 threonylcarbamoyladenosine biosynthesis protein TsaD</fullName>
    </alternativeName>
    <alternativeName>
        <fullName evidence="1">tRNA threonylcarbamoyladenosine biosynthesis protein TsaD</fullName>
    </alternativeName>
</protein>
<reference key="1">
    <citation type="journal article" date="2005" name="Genome Res.">
        <title>The Chlamydophila abortus genome sequence reveals an array of variable proteins that contribute to interspecies variation.</title>
        <authorList>
            <person name="Thomson N.R."/>
            <person name="Yeats C."/>
            <person name="Bell K."/>
            <person name="Holden M.T.G."/>
            <person name="Bentley S.D."/>
            <person name="Livingstone M."/>
            <person name="Cerdeno-Tarraga A.-M."/>
            <person name="Harris B."/>
            <person name="Doggett J."/>
            <person name="Ormond D."/>
            <person name="Mungall K."/>
            <person name="Clarke K."/>
            <person name="Feltwell T."/>
            <person name="Hance Z."/>
            <person name="Sanders M."/>
            <person name="Quail M.A."/>
            <person name="Price C."/>
            <person name="Barrell B.G."/>
            <person name="Parkhill J."/>
            <person name="Longbottom D."/>
        </authorList>
    </citation>
    <scope>NUCLEOTIDE SEQUENCE [LARGE SCALE GENOMIC DNA]</scope>
    <source>
        <strain>DSM 27085 / S26/3</strain>
    </source>
</reference>
<proteinExistence type="inferred from homology"/>
<accession>Q5L5V3</accession>
<comment type="function">
    <text evidence="1">Required for the formation of a threonylcarbamoyl group on adenosine at position 37 (t(6)A37) in tRNAs that read codons beginning with adenine. Is involved in the transfer of the threonylcarbamoyl moiety of threonylcarbamoyl-AMP (TC-AMP) to the N6 group of A37, together with TsaE and TsaB. TsaD likely plays a direct catalytic role in this reaction.</text>
</comment>
<comment type="catalytic activity">
    <reaction evidence="1">
        <text>L-threonylcarbamoyladenylate + adenosine(37) in tRNA = N(6)-L-threonylcarbamoyladenosine(37) in tRNA + AMP + H(+)</text>
        <dbReference type="Rhea" id="RHEA:37059"/>
        <dbReference type="Rhea" id="RHEA-COMP:10162"/>
        <dbReference type="Rhea" id="RHEA-COMP:10163"/>
        <dbReference type="ChEBI" id="CHEBI:15378"/>
        <dbReference type="ChEBI" id="CHEBI:73682"/>
        <dbReference type="ChEBI" id="CHEBI:74411"/>
        <dbReference type="ChEBI" id="CHEBI:74418"/>
        <dbReference type="ChEBI" id="CHEBI:456215"/>
        <dbReference type="EC" id="2.3.1.234"/>
    </reaction>
</comment>
<comment type="cofactor">
    <cofactor evidence="1">
        <name>Fe(2+)</name>
        <dbReference type="ChEBI" id="CHEBI:29033"/>
    </cofactor>
    <text evidence="1">Binds 1 Fe(2+) ion per subunit.</text>
</comment>
<comment type="subcellular location">
    <subcellularLocation>
        <location evidence="1">Cytoplasm</location>
    </subcellularLocation>
</comment>
<comment type="similarity">
    <text evidence="1">Belongs to the KAE1 / TsaD family.</text>
</comment>
<keyword id="KW-0012">Acyltransferase</keyword>
<keyword id="KW-0963">Cytoplasm</keyword>
<keyword id="KW-0408">Iron</keyword>
<keyword id="KW-0479">Metal-binding</keyword>
<keyword id="KW-0808">Transferase</keyword>
<keyword id="KW-0819">tRNA processing</keyword>